<gene>
    <name evidence="1" type="primary">glmM</name>
    <name type="ordered locus">MmarC7_0330</name>
</gene>
<dbReference type="EC" id="5.4.2.10" evidence="1"/>
<dbReference type="EMBL" id="CP000745">
    <property type="protein sequence ID" value="ABR65400.1"/>
    <property type="status" value="ALT_INIT"/>
    <property type="molecule type" value="Genomic_DNA"/>
</dbReference>
<dbReference type="SMR" id="A6VG24"/>
<dbReference type="STRING" id="426368.MmarC7_0330"/>
<dbReference type="KEGG" id="mmz:MmarC7_0330"/>
<dbReference type="eggNOG" id="arCOG00767">
    <property type="taxonomic scope" value="Archaea"/>
</dbReference>
<dbReference type="HOGENOM" id="CLU_016950_7_1_2"/>
<dbReference type="OrthoDB" id="10363at2157"/>
<dbReference type="GO" id="GO:0000287">
    <property type="term" value="F:magnesium ion binding"/>
    <property type="evidence" value="ECO:0007669"/>
    <property type="project" value="UniProtKB-UniRule"/>
</dbReference>
<dbReference type="GO" id="GO:0008966">
    <property type="term" value="F:phosphoglucosamine mutase activity"/>
    <property type="evidence" value="ECO:0007669"/>
    <property type="project" value="UniProtKB-UniRule"/>
</dbReference>
<dbReference type="GO" id="GO:0005975">
    <property type="term" value="P:carbohydrate metabolic process"/>
    <property type="evidence" value="ECO:0007669"/>
    <property type="project" value="InterPro"/>
</dbReference>
<dbReference type="CDD" id="cd03087">
    <property type="entry name" value="PGM_like1"/>
    <property type="match status" value="1"/>
</dbReference>
<dbReference type="FunFam" id="3.40.120.10:FF:000001">
    <property type="entry name" value="Phosphoglucosamine mutase"/>
    <property type="match status" value="1"/>
</dbReference>
<dbReference type="FunFam" id="3.40.120.10:FF:000003">
    <property type="entry name" value="Phosphoglucosamine mutase"/>
    <property type="match status" value="1"/>
</dbReference>
<dbReference type="FunFam" id="3.30.310.50:FF:000009">
    <property type="entry name" value="Probable phosphoglucosamine mutase"/>
    <property type="match status" value="1"/>
</dbReference>
<dbReference type="Gene3D" id="3.40.120.10">
    <property type="entry name" value="Alpha-D-Glucose-1,6-Bisphosphate, subunit A, domain 3"/>
    <property type="match status" value="3"/>
</dbReference>
<dbReference type="Gene3D" id="3.30.310.50">
    <property type="entry name" value="Alpha-D-phosphohexomutase, C-terminal domain"/>
    <property type="match status" value="1"/>
</dbReference>
<dbReference type="HAMAP" id="MF_01554_A">
    <property type="entry name" value="GlmM_A"/>
    <property type="match status" value="1"/>
</dbReference>
<dbReference type="InterPro" id="IPR005844">
    <property type="entry name" value="A-D-PHexomutase_a/b/a-I"/>
</dbReference>
<dbReference type="InterPro" id="IPR016055">
    <property type="entry name" value="A-D-PHexomutase_a/b/a-I/II/III"/>
</dbReference>
<dbReference type="InterPro" id="IPR005845">
    <property type="entry name" value="A-D-PHexomutase_a/b/a-II"/>
</dbReference>
<dbReference type="InterPro" id="IPR005846">
    <property type="entry name" value="A-D-PHexomutase_a/b/a-III"/>
</dbReference>
<dbReference type="InterPro" id="IPR005843">
    <property type="entry name" value="A-D-PHexomutase_C"/>
</dbReference>
<dbReference type="InterPro" id="IPR036900">
    <property type="entry name" value="A-D-PHexomutase_C_sf"/>
</dbReference>
<dbReference type="InterPro" id="IPR016066">
    <property type="entry name" value="A-D-PHexomutase_CS"/>
</dbReference>
<dbReference type="InterPro" id="IPR005841">
    <property type="entry name" value="Alpha-D-phosphohexomutase_SF"/>
</dbReference>
<dbReference type="InterPro" id="IPR023666">
    <property type="entry name" value="GlmM_arc"/>
</dbReference>
<dbReference type="InterPro" id="IPR024086">
    <property type="entry name" value="GlmM_arc-type"/>
</dbReference>
<dbReference type="NCBIfam" id="TIGR03990">
    <property type="entry name" value="Arch_GlmM"/>
    <property type="match status" value="1"/>
</dbReference>
<dbReference type="PANTHER" id="PTHR43771">
    <property type="entry name" value="PHOSPHOMANNOMUTASE"/>
    <property type="match status" value="1"/>
</dbReference>
<dbReference type="PANTHER" id="PTHR43771:SF1">
    <property type="entry name" value="PHOSPHOMANNOMUTASE"/>
    <property type="match status" value="1"/>
</dbReference>
<dbReference type="Pfam" id="PF02878">
    <property type="entry name" value="PGM_PMM_I"/>
    <property type="match status" value="1"/>
</dbReference>
<dbReference type="Pfam" id="PF02879">
    <property type="entry name" value="PGM_PMM_II"/>
    <property type="match status" value="1"/>
</dbReference>
<dbReference type="Pfam" id="PF02880">
    <property type="entry name" value="PGM_PMM_III"/>
    <property type="match status" value="1"/>
</dbReference>
<dbReference type="Pfam" id="PF00408">
    <property type="entry name" value="PGM_PMM_IV"/>
    <property type="match status" value="1"/>
</dbReference>
<dbReference type="PRINTS" id="PR00509">
    <property type="entry name" value="PGMPMM"/>
</dbReference>
<dbReference type="SUPFAM" id="SSF55957">
    <property type="entry name" value="Phosphoglucomutase, C-terminal domain"/>
    <property type="match status" value="1"/>
</dbReference>
<dbReference type="SUPFAM" id="SSF53738">
    <property type="entry name" value="Phosphoglucomutase, first 3 domains"/>
    <property type="match status" value="3"/>
</dbReference>
<dbReference type="PROSITE" id="PS00710">
    <property type="entry name" value="PGM_PMM"/>
    <property type="match status" value="1"/>
</dbReference>
<accession>A6VG24</accession>
<sequence>MKLFGTSGIRMKNLDPLIAYKVGFAISKNFKKAVIGRDTRTTGNLIESAITAGLLNGGCDVTTIGMVPTPVLGYSARDYDLGIMITASHNPPEYNGIKLFNKNGTAFDPKQEEKLEKIIANDDFNEGTWDNIGCASEDKTAVKKYSEYILQNVDIKTNFNVVVDCANAAGCVVSPNIFTEAGCKVISVNSHCDGRFVGRMPEPNETNLKETVDIIKGLNSNGRNYIGIAHDGDADRMIAIDELGRVTDFDKLLAAFCKYVVQKTGADKIVTTVDASMAIDEYLDEFGAKVIRTKIGDVAVAEELEKTGAIFGGEPSGTWIHRDIHLTPDGILSGLRVLEMMEFYGKKLCDIIDEVPSYYNMREKIACPDNLKQKVMDYISKEGKKIFEKEPETLDGVRFSFEKGWMLIRPSGTESYVRVRVEAKDEDFAEKLMENGISMVKTGISEN</sequence>
<evidence type="ECO:0000255" key="1">
    <source>
        <dbReference type="HAMAP-Rule" id="MF_01554"/>
    </source>
</evidence>
<evidence type="ECO:0000305" key="2"/>
<organism>
    <name type="scientific">Methanococcus maripaludis (strain C7 / ATCC BAA-1331)</name>
    <dbReference type="NCBI Taxonomy" id="426368"/>
    <lineage>
        <taxon>Archaea</taxon>
        <taxon>Methanobacteriati</taxon>
        <taxon>Methanobacteriota</taxon>
        <taxon>Methanomada group</taxon>
        <taxon>Methanococci</taxon>
        <taxon>Methanococcales</taxon>
        <taxon>Methanococcaceae</taxon>
        <taxon>Methanococcus</taxon>
    </lineage>
</organism>
<keyword id="KW-0413">Isomerase</keyword>
<keyword id="KW-0460">Magnesium</keyword>
<keyword id="KW-0479">Metal-binding</keyword>
<keyword id="KW-0597">Phosphoprotein</keyword>
<protein>
    <recommendedName>
        <fullName evidence="1">Phosphoglucosamine mutase</fullName>
        <ecNumber evidence="1">5.4.2.10</ecNumber>
    </recommendedName>
</protein>
<reference key="1">
    <citation type="submission" date="2007-06" db="EMBL/GenBank/DDBJ databases">
        <title>Complete sequence of Methanococcus maripaludis C7.</title>
        <authorList>
            <consortium name="US DOE Joint Genome Institute"/>
            <person name="Copeland A."/>
            <person name="Lucas S."/>
            <person name="Lapidus A."/>
            <person name="Barry K."/>
            <person name="Glavina del Rio T."/>
            <person name="Dalin E."/>
            <person name="Tice H."/>
            <person name="Pitluck S."/>
            <person name="Clum A."/>
            <person name="Schmutz J."/>
            <person name="Larimer F."/>
            <person name="Land M."/>
            <person name="Hauser L."/>
            <person name="Kyrpides N."/>
            <person name="Anderson I."/>
            <person name="Sieprawska-Lupa M."/>
            <person name="Whitman W.B."/>
            <person name="Richardson P."/>
        </authorList>
    </citation>
    <scope>NUCLEOTIDE SEQUENCE [LARGE SCALE GENOMIC DNA]</scope>
    <source>
        <strain>C7 / ATCC BAA-1331</strain>
    </source>
</reference>
<proteinExistence type="inferred from homology"/>
<comment type="function">
    <text evidence="1">Catalyzes the conversion of glucosamine-6-phosphate to glucosamine-1-phosphate.</text>
</comment>
<comment type="catalytic activity">
    <reaction evidence="1">
        <text>alpha-D-glucosamine 1-phosphate = D-glucosamine 6-phosphate</text>
        <dbReference type="Rhea" id="RHEA:23424"/>
        <dbReference type="ChEBI" id="CHEBI:58516"/>
        <dbReference type="ChEBI" id="CHEBI:58725"/>
        <dbReference type="EC" id="5.4.2.10"/>
    </reaction>
</comment>
<comment type="cofactor">
    <cofactor evidence="1">
        <name>Mg(2+)</name>
        <dbReference type="ChEBI" id="CHEBI:18420"/>
    </cofactor>
    <text evidence="1">Binds 1 Mg(2+) ion per subunit.</text>
</comment>
<comment type="PTM">
    <text evidence="1">Activated by phosphorylation.</text>
</comment>
<comment type="similarity">
    <text evidence="1">Belongs to the phosphohexose mutase family.</text>
</comment>
<comment type="sequence caution" evidence="2">
    <conflict type="erroneous initiation">
        <sequence resource="EMBL-CDS" id="ABR65400"/>
    </conflict>
</comment>
<feature type="chain" id="PRO_0000337815" description="Phosphoglucosamine mutase">
    <location>
        <begin position="1"/>
        <end position="447"/>
    </location>
</feature>
<feature type="active site" description="Phosphoserine intermediate" evidence="1">
    <location>
        <position position="88"/>
    </location>
</feature>
<feature type="binding site" description="via phosphate group" evidence="1">
    <location>
        <position position="88"/>
    </location>
    <ligand>
        <name>Mg(2+)</name>
        <dbReference type="ChEBI" id="CHEBI:18420"/>
    </ligand>
</feature>
<feature type="binding site" evidence="1">
    <location>
        <position position="231"/>
    </location>
    <ligand>
        <name>Mg(2+)</name>
        <dbReference type="ChEBI" id="CHEBI:18420"/>
    </ligand>
</feature>
<feature type="binding site" evidence="1">
    <location>
        <position position="233"/>
    </location>
    <ligand>
        <name>Mg(2+)</name>
        <dbReference type="ChEBI" id="CHEBI:18420"/>
    </ligand>
</feature>
<feature type="binding site" evidence="1">
    <location>
        <position position="235"/>
    </location>
    <ligand>
        <name>Mg(2+)</name>
        <dbReference type="ChEBI" id="CHEBI:18420"/>
    </ligand>
</feature>
<feature type="modified residue" description="Phosphoserine" evidence="1">
    <location>
        <position position="88"/>
    </location>
</feature>
<name>GLMM_METM7</name>